<comment type="function">
    <text evidence="1">The glycine cleavage system catalyzes the degradation of glycine.</text>
</comment>
<comment type="catalytic activity">
    <reaction evidence="1">
        <text>N(6)-[(R)-S(8)-aminomethyldihydrolipoyl]-L-lysyl-[protein] + (6S)-5,6,7,8-tetrahydrofolate = N(6)-[(R)-dihydrolipoyl]-L-lysyl-[protein] + (6R)-5,10-methylene-5,6,7,8-tetrahydrofolate + NH4(+)</text>
        <dbReference type="Rhea" id="RHEA:16945"/>
        <dbReference type="Rhea" id="RHEA-COMP:10475"/>
        <dbReference type="Rhea" id="RHEA-COMP:10492"/>
        <dbReference type="ChEBI" id="CHEBI:15636"/>
        <dbReference type="ChEBI" id="CHEBI:28938"/>
        <dbReference type="ChEBI" id="CHEBI:57453"/>
        <dbReference type="ChEBI" id="CHEBI:83100"/>
        <dbReference type="ChEBI" id="CHEBI:83143"/>
        <dbReference type="EC" id="2.1.2.10"/>
    </reaction>
</comment>
<comment type="subunit">
    <text evidence="1">The glycine cleavage system is composed of four proteins: P, T, L and H.</text>
</comment>
<comment type="similarity">
    <text evidence="1">Belongs to the GcvT family.</text>
</comment>
<sequence>MTELKRTPLYEQHRRAGAKLIDFGGWEMPVQYAGVIEEHKAVRSKAGLFDVSHMGEVELKGKDSLAFLQYLLTNDVSRIQDNQIQYSPMCTSAGGVVDDLLVYRYSREHFLLVVNASNTDKDFAWMQAQAEGFEISLENRSGDFAQLALQGPWAEKILQKLTSMDLAQINYYWFKHGEVDGVLCLISRTGYTGEDGFEIYLPPEHAPRMWERILEVGGSEGVQPIGLGARDTLRFEARLPLYGNELGPDITPLEAGLGFFVKLEKDNFIGKEALSAQKEKGVPRKLVGLEMIERGIARSHYPLQKEGKEIGFITSGSFSPTLNKNIALGLIPPEYAQIGETLDVIIRGKAVKARIIPSLFYKRQG</sequence>
<evidence type="ECO:0000255" key="1">
    <source>
        <dbReference type="HAMAP-Rule" id="MF_00259"/>
    </source>
</evidence>
<organism>
    <name type="scientific">Desulfitobacterium hafniense (strain DSM 10664 / DCB-2)</name>
    <dbReference type="NCBI Taxonomy" id="272564"/>
    <lineage>
        <taxon>Bacteria</taxon>
        <taxon>Bacillati</taxon>
        <taxon>Bacillota</taxon>
        <taxon>Clostridia</taxon>
        <taxon>Eubacteriales</taxon>
        <taxon>Desulfitobacteriaceae</taxon>
        <taxon>Desulfitobacterium</taxon>
    </lineage>
</organism>
<gene>
    <name evidence="1" type="primary">gcvT</name>
    <name type="ordered locus">Dhaf_4039</name>
</gene>
<dbReference type="EC" id="2.1.2.10" evidence="1"/>
<dbReference type="EMBL" id="CP001336">
    <property type="protein sequence ID" value="ACL22049.1"/>
    <property type="molecule type" value="Genomic_DNA"/>
</dbReference>
<dbReference type="RefSeq" id="WP_005811336.1">
    <property type="nucleotide sequence ID" value="NC_011830.1"/>
</dbReference>
<dbReference type="SMR" id="B8FT33"/>
<dbReference type="KEGG" id="dhd:Dhaf_4039"/>
<dbReference type="HOGENOM" id="CLU_007884_10_2_9"/>
<dbReference type="Proteomes" id="UP000007726">
    <property type="component" value="Chromosome"/>
</dbReference>
<dbReference type="GO" id="GO:0005829">
    <property type="term" value="C:cytosol"/>
    <property type="evidence" value="ECO:0007669"/>
    <property type="project" value="TreeGrafter"/>
</dbReference>
<dbReference type="GO" id="GO:0005960">
    <property type="term" value="C:glycine cleavage complex"/>
    <property type="evidence" value="ECO:0007669"/>
    <property type="project" value="InterPro"/>
</dbReference>
<dbReference type="GO" id="GO:0004047">
    <property type="term" value="F:aminomethyltransferase activity"/>
    <property type="evidence" value="ECO:0007669"/>
    <property type="project" value="UniProtKB-UniRule"/>
</dbReference>
<dbReference type="GO" id="GO:0008483">
    <property type="term" value="F:transaminase activity"/>
    <property type="evidence" value="ECO:0007669"/>
    <property type="project" value="UniProtKB-KW"/>
</dbReference>
<dbReference type="GO" id="GO:0019464">
    <property type="term" value="P:glycine decarboxylation via glycine cleavage system"/>
    <property type="evidence" value="ECO:0007669"/>
    <property type="project" value="UniProtKB-UniRule"/>
</dbReference>
<dbReference type="FunFam" id="2.40.30.110:FF:000003">
    <property type="entry name" value="Aminomethyltransferase"/>
    <property type="match status" value="1"/>
</dbReference>
<dbReference type="FunFam" id="3.30.70.1400:FF:000001">
    <property type="entry name" value="Aminomethyltransferase"/>
    <property type="match status" value="1"/>
</dbReference>
<dbReference type="FunFam" id="4.10.1250.10:FF:000001">
    <property type="entry name" value="Aminomethyltransferase"/>
    <property type="match status" value="1"/>
</dbReference>
<dbReference type="Gene3D" id="2.40.30.110">
    <property type="entry name" value="Aminomethyltransferase beta-barrel domains"/>
    <property type="match status" value="1"/>
</dbReference>
<dbReference type="Gene3D" id="3.30.70.1400">
    <property type="entry name" value="Aminomethyltransferase beta-barrel domains"/>
    <property type="match status" value="1"/>
</dbReference>
<dbReference type="Gene3D" id="4.10.1250.10">
    <property type="entry name" value="Aminomethyltransferase fragment"/>
    <property type="match status" value="1"/>
</dbReference>
<dbReference type="Gene3D" id="3.30.1360.120">
    <property type="entry name" value="Probable tRNA modification gtpase trme, domain 1"/>
    <property type="match status" value="1"/>
</dbReference>
<dbReference type="HAMAP" id="MF_00259">
    <property type="entry name" value="GcvT"/>
    <property type="match status" value="1"/>
</dbReference>
<dbReference type="InterPro" id="IPR006223">
    <property type="entry name" value="GCS_T"/>
</dbReference>
<dbReference type="InterPro" id="IPR022903">
    <property type="entry name" value="GCS_T_bac"/>
</dbReference>
<dbReference type="InterPro" id="IPR013977">
    <property type="entry name" value="GCST_C"/>
</dbReference>
<dbReference type="InterPro" id="IPR006222">
    <property type="entry name" value="GCV_T_N"/>
</dbReference>
<dbReference type="InterPro" id="IPR028896">
    <property type="entry name" value="GcvT/YgfZ/DmdA"/>
</dbReference>
<dbReference type="InterPro" id="IPR029043">
    <property type="entry name" value="GcvT/YgfZ_C"/>
</dbReference>
<dbReference type="InterPro" id="IPR027266">
    <property type="entry name" value="TrmE/GcvT_dom1"/>
</dbReference>
<dbReference type="NCBIfam" id="TIGR00528">
    <property type="entry name" value="gcvT"/>
    <property type="match status" value="1"/>
</dbReference>
<dbReference type="NCBIfam" id="NF001567">
    <property type="entry name" value="PRK00389.1"/>
    <property type="match status" value="1"/>
</dbReference>
<dbReference type="PANTHER" id="PTHR43757">
    <property type="entry name" value="AMINOMETHYLTRANSFERASE"/>
    <property type="match status" value="1"/>
</dbReference>
<dbReference type="PANTHER" id="PTHR43757:SF2">
    <property type="entry name" value="AMINOMETHYLTRANSFERASE, MITOCHONDRIAL"/>
    <property type="match status" value="1"/>
</dbReference>
<dbReference type="Pfam" id="PF01571">
    <property type="entry name" value="GCV_T"/>
    <property type="match status" value="1"/>
</dbReference>
<dbReference type="Pfam" id="PF08669">
    <property type="entry name" value="GCV_T_C"/>
    <property type="match status" value="1"/>
</dbReference>
<dbReference type="PIRSF" id="PIRSF006487">
    <property type="entry name" value="GcvT"/>
    <property type="match status" value="1"/>
</dbReference>
<dbReference type="SUPFAM" id="SSF101790">
    <property type="entry name" value="Aminomethyltransferase beta-barrel domain"/>
    <property type="match status" value="1"/>
</dbReference>
<dbReference type="SUPFAM" id="SSF103025">
    <property type="entry name" value="Folate-binding domain"/>
    <property type="match status" value="1"/>
</dbReference>
<reference key="1">
    <citation type="journal article" date="2012" name="BMC Microbiol.">
        <title>Genome sequence of Desulfitobacterium hafniense DCB-2, a Gram-positive anaerobe capable of dehalogenation and metal reduction.</title>
        <authorList>
            <person name="Kim S.H."/>
            <person name="Harzman C."/>
            <person name="Davis J.K."/>
            <person name="Hutcheson R."/>
            <person name="Broderick J.B."/>
            <person name="Marsh T.L."/>
            <person name="Tiedje J.M."/>
        </authorList>
    </citation>
    <scope>NUCLEOTIDE SEQUENCE [LARGE SCALE GENOMIC DNA]</scope>
    <source>
        <strain>DSM 10664 / DCB-2</strain>
    </source>
</reference>
<accession>B8FT33</accession>
<name>GCST_DESHD</name>
<protein>
    <recommendedName>
        <fullName evidence="1">Aminomethyltransferase</fullName>
        <ecNumber evidence="1">2.1.2.10</ecNumber>
    </recommendedName>
    <alternativeName>
        <fullName evidence="1">Glycine cleavage system T protein</fullName>
    </alternativeName>
</protein>
<feature type="chain" id="PRO_1000125636" description="Aminomethyltransferase">
    <location>
        <begin position="1"/>
        <end position="365"/>
    </location>
</feature>
<proteinExistence type="inferred from homology"/>
<keyword id="KW-0032">Aminotransferase</keyword>
<keyword id="KW-0808">Transferase</keyword>